<feature type="signal peptide" evidence="1">
    <location>
        <begin position="1"/>
        <end position="29"/>
    </location>
</feature>
<feature type="chain" id="PRO_0000269998" description="Chaperone SurA">
    <location>
        <begin position="30"/>
        <end position="435"/>
    </location>
</feature>
<feature type="domain" description="PpiC 1" evidence="1">
    <location>
        <begin position="180"/>
        <end position="281"/>
    </location>
</feature>
<feature type="domain" description="PpiC 2" evidence="1">
    <location>
        <begin position="290"/>
        <end position="390"/>
    </location>
</feature>
<evidence type="ECO:0000255" key="1">
    <source>
        <dbReference type="HAMAP-Rule" id="MF_01183"/>
    </source>
</evidence>
<comment type="function">
    <text evidence="1">Chaperone involved in the correct folding and assembly of outer membrane proteins. Recognizes specific patterns of aromatic residues and the orientation of their side chains, which are found more frequently in integral outer membrane proteins. May act in both early periplasmic and late outer membrane-associated steps of protein maturation.</text>
</comment>
<comment type="catalytic activity">
    <reaction evidence="1">
        <text>[protein]-peptidylproline (omega=180) = [protein]-peptidylproline (omega=0)</text>
        <dbReference type="Rhea" id="RHEA:16237"/>
        <dbReference type="Rhea" id="RHEA-COMP:10747"/>
        <dbReference type="Rhea" id="RHEA-COMP:10748"/>
        <dbReference type="ChEBI" id="CHEBI:83833"/>
        <dbReference type="ChEBI" id="CHEBI:83834"/>
        <dbReference type="EC" id="5.2.1.8"/>
    </reaction>
</comment>
<comment type="subcellular location">
    <subcellularLocation>
        <location evidence="1">Periplasm</location>
    </subcellularLocation>
    <text evidence="1">Is capable of associating with the outer membrane.</text>
</comment>
<comment type="domain">
    <text evidence="1">The PPIase activity resides only in the second parvulin domain. The N-terminal region and the C-terminal tail are necessary and sufficient for the chaperone activity of SurA. The PPIase activity is dispensable for SurA to function as a chaperone. The N-terminal region and the C-terminal tail are also required for porin recognition.</text>
</comment>
<accession>Q0VMV4</accession>
<proteinExistence type="inferred from homology"/>
<reference key="1">
    <citation type="journal article" date="2006" name="Nat. Biotechnol.">
        <title>Genome sequence of the ubiquitous hydrocarbon-degrading marine bacterium Alcanivorax borkumensis.</title>
        <authorList>
            <person name="Schneiker S."/>
            <person name="Martins dos Santos V.A.P."/>
            <person name="Bartels D."/>
            <person name="Bekel T."/>
            <person name="Brecht M."/>
            <person name="Buhrmester J."/>
            <person name="Chernikova T.N."/>
            <person name="Denaro R."/>
            <person name="Ferrer M."/>
            <person name="Gertler C."/>
            <person name="Goesmann A."/>
            <person name="Golyshina O.V."/>
            <person name="Kaminski F."/>
            <person name="Khachane A.N."/>
            <person name="Lang S."/>
            <person name="Linke B."/>
            <person name="McHardy A.C."/>
            <person name="Meyer F."/>
            <person name="Nechitaylo T."/>
            <person name="Puehler A."/>
            <person name="Regenhardt D."/>
            <person name="Rupp O."/>
            <person name="Sabirova J.S."/>
            <person name="Selbitschka W."/>
            <person name="Yakimov M.M."/>
            <person name="Timmis K.N."/>
            <person name="Vorhoelter F.-J."/>
            <person name="Weidner S."/>
            <person name="Kaiser O."/>
            <person name="Golyshin P.N."/>
        </authorList>
    </citation>
    <scope>NUCLEOTIDE SEQUENCE [LARGE SCALE GENOMIC DNA]</scope>
    <source>
        <strain>ATCC 700651 / DSM 11573 / NCIMB 13689 / SK2</strain>
    </source>
</reference>
<sequence length="435" mass="49312">MINKTLHTKHTLLGLLAMAVLMIPVWSQAKVQMLDRIVAVVNDGAIMASELDERINTIALQFQEKGQQLPSPAILREQVLDRMILERLQLQLAERAGIKVDEASLNEALAGIARQNDMSLEDFAATLREDGYSWTQFREQIRQDMVISRLQQRSVASRIQITDREVDRFLSSELGKQMFQEDFRLGHILIRVPSEARPQQISQARAKAKEIIERLEAGSDFQQLAIALSDGPNALEGGDLGWRPAAQWPTLFAENAINLKKGEFSQPLRSGAGFHILKMIDRKGGAEKVVTQYHVRHVLIKADALTSAEQAQQRAIRLHDEVAAGKRQFKETAAEFSDDPGSARNGGELGWVNKGEMVPEFEQVMLNTPVGELSPVFESQFGWHFLRVDDIRDADMSTEFRRMQATQALQKRRFEEELETWVQEKRSESYVDIRL</sequence>
<gene>
    <name evidence="1" type="primary">surA</name>
    <name type="ordered locus">ABO_2046</name>
</gene>
<name>SURA_ALCBS</name>
<keyword id="KW-0143">Chaperone</keyword>
<keyword id="KW-0413">Isomerase</keyword>
<keyword id="KW-0574">Periplasm</keyword>
<keyword id="KW-1185">Reference proteome</keyword>
<keyword id="KW-0677">Repeat</keyword>
<keyword id="KW-0697">Rotamase</keyword>
<keyword id="KW-0732">Signal</keyword>
<dbReference type="EC" id="5.2.1.8" evidence="1"/>
<dbReference type="EMBL" id="AM286690">
    <property type="protein sequence ID" value="CAL17494.1"/>
    <property type="molecule type" value="Genomic_DNA"/>
</dbReference>
<dbReference type="RefSeq" id="WP_011589325.1">
    <property type="nucleotide sequence ID" value="NC_008260.1"/>
</dbReference>
<dbReference type="SMR" id="Q0VMV4"/>
<dbReference type="STRING" id="393595.ABO_2046"/>
<dbReference type="KEGG" id="abo:ABO_2046"/>
<dbReference type="eggNOG" id="COG0760">
    <property type="taxonomic scope" value="Bacteria"/>
</dbReference>
<dbReference type="HOGENOM" id="CLU_034646_11_0_6"/>
<dbReference type="OrthoDB" id="14196at2"/>
<dbReference type="Proteomes" id="UP000008871">
    <property type="component" value="Chromosome"/>
</dbReference>
<dbReference type="GO" id="GO:0030288">
    <property type="term" value="C:outer membrane-bounded periplasmic space"/>
    <property type="evidence" value="ECO:0007669"/>
    <property type="project" value="InterPro"/>
</dbReference>
<dbReference type="GO" id="GO:0042277">
    <property type="term" value="F:peptide binding"/>
    <property type="evidence" value="ECO:0007669"/>
    <property type="project" value="InterPro"/>
</dbReference>
<dbReference type="GO" id="GO:0003755">
    <property type="term" value="F:peptidyl-prolyl cis-trans isomerase activity"/>
    <property type="evidence" value="ECO:0007669"/>
    <property type="project" value="UniProtKB-UniRule"/>
</dbReference>
<dbReference type="GO" id="GO:0051082">
    <property type="term" value="F:unfolded protein binding"/>
    <property type="evidence" value="ECO:0007669"/>
    <property type="project" value="UniProtKB-UniRule"/>
</dbReference>
<dbReference type="GO" id="GO:0043165">
    <property type="term" value="P:Gram-negative-bacterium-type cell outer membrane assembly"/>
    <property type="evidence" value="ECO:0007669"/>
    <property type="project" value="InterPro"/>
</dbReference>
<dbReference type="GO" id="GO:0006457">
    <property type="term" value="P:protein folding"/>
    <property type="evidence" value="ECO:0007669"/>
    <property type="project" value="UniProtKB-UniRule"/>
</dbReference>
<dbReference type="GO" id="GO:0050821">
    <property type="term" value="P:protein stabilization"/>
    <property type="evidence" value="ECO:0007669"/>
    <property type="project" value="InterPro"/>
</dbReference>
<dbReference type="Gene3D" id="3.10.50.40">
    <property type="match status" value="2"/>
</dbReference>
<dbReference type="Gene3D" id="1.10.4030.10">
    <property type="entry name" value="Porin chaperone SurA, peptide-binding domain"/>
    <property type="match status" value="1"/>
</dbReference>
<dbReference type="HAMAP" id="MF_01183">
    <property type="entry name" value="Chaperone_SurA"/>
    <property type="match status" value="1"/>
</dbReference>
<dbReference type="InterPro" id="IPR050280">
    <property type="entry name" value="OMP_Chaperone_SurA"/>
</dbReference>
<dbReference type="InterPro" id="IPR046357">
    <property type="entry name" value="PPIase_dom_sf"/>
</dbReference>
<dbReference type="InterPro" id="IPR000297">
    <property type="entry name" value="PPIase_PpiC"/>
</dbReference>
<dbReference type="InterPro" id="IPR023034">
    <property type="entry name" value="PPIase_SurA"/>
</dbReference>
<dbReference type="InterPro" id="IPR015391">
    <property type="entry name" value="SurA_N"/>
</dbReference>
<dbReference type="InterPro" id="IPR027304">
    <property type="entry name" value="Trigger_fact/SurA_dom_sf"/>
</dbReference>
<dbReference type="PANTHER" id="PTHR47637">
    <property type="entry name" value="CHAPERONE SURA"/>
    <property type="match status" value="1"/>
</dbReference>
<dbReference type="PANTHER" id="PTHR47637:SF1">
    <property type="entry name" value="CHAPERONE SURA"/>
    <property type="match status" value="1"/>
</dbReference>
<dbReference type="Pfam" id="PF00639">
    <property type="entry name" value="Rotamase"/>
    <property type="match status" value="1"/>
</dbReference>
<dbReference type="Pfam" id="PF13616">
    <property type="entry name" value="Rotamase_3"/>
    <property type="match status" value="1"/>
</dbReference>
<dbReference type="Pfam" id="PF09312">
    <property type="entry name" value="SurA_N"/>
    <property type="match status" value="1"/>
</dbReference>
<dbReference type="SUPFAM" id="SSF54534">
    <property type="entry name" value="FKBP-like"/>
    <property type="match status" value="2"/>
</dbReference>
<dbReference type="SUPFAM" id="SSF109998">
    <property type="entry name" value="Triger factor/SurA peptide-binding domain-like"/>
    <property type="match status" value="1"/>
</dbReference>
<dbReference type="PROSITE" id="PS50198">
    <property type="entry name" value="PPIC_PPIASE_2"/>
    <property type="match status" value="2"/>
</dbReference>
<protein>
    <recommendedName>
        <fullName evidence="1">Chaperone SurA</fullName>
    </recommendedName>
    <alternativeName>
        <fullName evidence="1">Peptidyl-prolyl cis-trans isomerase SurA</fullName>
        <shortName evidence="1">PPIase SurA</shortName>
        <ecNumber evidence="1">5.2.1.8</ecNumber>
    </alternativeName>
    <alternativeName>
        <fullName evidence="1">Rotamase SurA</fullName>
    </alternativeName>
</protein>
<organism>
    <name type="scientific">Alcanivorax borkumensis (strain ATCC 700651 / DSM 11573 / NCIMB 13689 / SK2)</name>
    <dbReference type="NCBI Taxonomy" id="393595"/>
    <lineage>
        <taxon>Bacteria</taxon>
        <taxon>Pseudomonadati</taxon>
        <taxon>Pseudomonadota</taxon>
        <taxon>Gammaproteobacteria</taxon>
        <taxon>Oceanospirillales</taxon>
        <taxon>Alcanivoracaceae</taxon>
        <taxon>Alcanivorax</taxon>
    </lineage>
</organism>